<organism>
    <name type="scientific">Shigella sonnei (strain Ss046)</name>
    <dbReference type="NCBI Taxonomy" id="300269"/>
    <lineage>
        <taxon>Bacteria</taxon>
        <taxon>Pseudomonadati</taxon>
        <taxon>Pseudomonadota</taxon>
        <taxon>Gammaproteobacteria</taxon>
        <taxon>Enterobacterales</taxon>
        <taxon>Enterobacteriaceae</taxon>
        <taxon>Shigella</taxon>
    </lineage>
</organism>
<proteinExistence type="inferred from homology"/>
<gene>
    <name evidence="1" type="primary">hisH</name>
    <name type="ordered locus">SSON_2094</name>
</gene>
<keyword id="KW-0028">Amino-acid biosynthesis</keyword>
<keyword id="KW-0963">Cytoplasm</keyword>
<keyword id="KW-0315">Glutamine amidotransferase</keyword>
<keyword id="KW-0368">Histidine biosynthesis</keyword>
<keyword id="KW-0378">Hydrolase</keyword>
<keyword id="KW-0456">Lyase</keyword>
<keyword id="KW-1185">Reference proteome</keyword>
<evidence type="ECO:0000255" key="1">
    <source>
        <dbReference type="HAMAP-Rule" id="MF_00278"/>
    </source>
</evidence>
<feature type="chain" id="PRO_0000231759" description="Imidazole glycerol phosphate synthase subunit HisH">
    <location>
        <begin position="1"/>
        <end position="196"/>
    </location>
</feature>
<feature type="domain" description="Glutamine amidotransferase type-1" evidence="1">
    <location>
        <begin position="2"/>
        <end position="196"/>
    </location>
</feature>
<feature type="active site" description="Nucleophile" evidence="1">
    <location>
        <position position="77"/>
    </location>
</feature>
<feature type="active site" evidence="1">
    <location>
        <position position="178"/>
    </location>
</feature>
<feature type="active site" evidence="1">
    <location>
        <position position="180"/>
    </location>
</feature>
<accession>Q3Z0G2</accession>
<reference key="1">
    <citation type="journal article" date="2005" name="Nucleic Acids Res.">
        <title>Genome dynamics and diversity of Shigella species, the etiologic agents of bacillary dysentery.</title>
        <authorList>
            <person name="Yang F."/>
            <person name="Yang J."/>
            <person name="Zhang X."/>
            <person name="Chen L."/>
            <person name="Jiang Y."/>
            <person name="Yan Y."/>
            <person name="Tang X."/>
            <person name="Wang J."/>
            <person name="Xiong Z."/>
            <person name="Dong J."/>
            <person name="Xue Y."/>
            <person name="Zhu Y."/>
            <person name="Xu X."/>
            <person name="Sun L."/>
            <person name="Chen S."/>
            <person name="Nie H."/>
            <person name="Peng J."/>
            <person name="Xu J."/>
            <person name="Wang Y."/>
            <person name="Yuan Z."/>
            <person name="Wen Y."/>
            <person name="Yao Z."/>
            <person name="Shen Y."/>
            <person name="Qiang B."/>
            <person name="Hou Y."/>
            <person name="Yu J."/>
            <person name="Jin Q."/>
        </authorList>
    </citation>
    <scope>NUCLEOTIDE SEQUENCE [LARGE SCALE GENOMIC DNA]</scope>
    <source>
        <strain>Ss046</strain>
    </source>
</reference>
<comment type="function">
    <text evidence="1">IGPS catalyzes the conversion of PRFAR and glutamine to IGP, AICAR and glutamate. The HisH subunit catalyzes the hydrolysis of glutamine to glutamate and ammonia as part of the synthesis of IGP and AICAR. The resulting ammonia molecule is channeled to the active site of HisF.</text>
</comment>
<comment type="catalytic activity">
    <reaction evidence="1">
        <text>5-[(5-phospho-1-deoxy-D-ribulos-1-ylimino)methylamino]-1-(5-phospho-beta-D-ribosyl)imidazole-4-carboxamide + L-glutamine = D-erythro-1-(imidazol-4-yl)glycerol 3-phosphate + 5-amino-1-(5-phospho-beta-D-ribosyl)imidazole-4-carboxamide + L-glutamate + H(+)</text>
        <dbReference type="Rhea" id="RHEA:24793"/>
        <dbReference type="ChEBI" id="CHEBI:15378"/>
        <dbReference type="ChEBI" id="CHEBI:29985"/>
        <dbReference type="ChEBI" id="CHEBI:58278"/>
        <dbReference type="ChEBI" id="CHEBI:58359"/>
        <dbReference type="ChEBI" id="CHEBI:58475"/>
        <dbReference type="ChEBI" id="CHEBI:58525"/>
        <dbReference type="EC" id="4.3.2.10"/>
    </reaction>
</comment>
<comment type="catalytic activity">
    <reaction evidence="1">
        <text>L-glutamine + H2O = L-glutamate + NH4(+)</text>
        <dbReference type="Rhea" id="RHEA:15889"/>
        <dbReference type="ChEBI" id="CHEBI:15377"/>
        <dbReference type="ChEBI" id="CHEBI:28938"/>
        <dbReference type="ChEBI" id="CHEBI:29985"/>
        <dbReference type="ChEBI" id="CHEBI:58359"/>
        <dbReference type="EC" id="3.5.1.2"/>
    </reaction>
</comment>
<comment type="pathway">
    <text evidence="1">Amino-acid biosynthesis; L-histidine biosynthesis; L-histidine from 5-phospho-alpha-D-ribose 1-diphosphate: step 5/9.</text>
</comment>
<comment type="subunit">
    <text evidence="1">Heterodimer of HisH and HisF.</text>
</comment>
<comment type="subcellular location">
    <subcellularLocation>
        <location evidence="1">Cytoplasm</location>
    </subcellularLocation>
</comment>
<name>HIS5_SHISS</name>
<protein>
    <recommendedName>
        <fullName evidence="1">Imidazole glycerol phosphate synthase subunit HisH</fullName>
        <ecNumber evidence="1">4.3.2.10</ecNumber>
    </recommendedName>
    <alternativeName>
        <fullName evidence="1">IGP synthase glutaminase subunit</fullName>
        <ecNumber evidence="1">3.5.1.2</ecNumber>
    </alternativeName>
    <alternativeName>
        <fullName evidence="1">IGP synthase subunit HisH</fullName>
    </alternativeName>
    <alternativeName>
        <fullName evidence="1">ImGP synthase subunit HisH</fullName>
        <shortName evidence="1">IGPS subunit HisH</shortName>
    </alternativeName>
</protein>
<dbReference type="EC" id="4.3.2.10" evidence="1"/>
<dbReference type="EC" id="3.5.1.2" evidence="1"/>
<dbReference type="EMBL" id="CP000038">
    <property type="protein sequence ID" value="AAZ88750.1"/>
    <property type="molecule type" value="Genomic_DNA"/>
</dbReference>
<dbReference type="RefSeq" id="WP_001103560.1">
    <property type="nucleotide sequence ID" value="NC_007384.1"/>
</dbReference>
<dbReference type="SMR" id="Q3Z0G2"/>
<dbReference type="GeneID" id="93775150"/>
<dbReference type="KEGG" id="ssn:SSON_2094"/>
<dbReference type="HOGENOM" id="CLU_071837_0_0_6"/>
<dbReference type="UniPathway" id="UPA00031">
    <property type="reaction ID" value="UER00010"/>
</dbReference>
<dbReference type="Proteomes" id="UP000002529">
    <property type="component" value="Chromosome"/>
</dbReference>
<dbReference type="GO" id="GO:0005737">
    <property type="term" value="C:cytoplasm"/>
    <property type="evidence" value="ECO:0007669"/>
    <property type="project" value="UniProtKB-SubCell"/>
</dbReference>
<dbReference type="GO" id="GO:0004359">
    <property type="term" value="F:glutaminase activity"/>
    <property type="evidence" value="ECO:0007669"/>
    <property type="project" value="UniProtKB-EC"/>
</dbReference>
<dbReference type="GO" id="GO:0000107">
    <property type="term" value="F:imidazoleglycerol-phosphate synthase activity"/>
    <property type="evidence" value="ECO:0007669"/>
    <property type="project" value="UniProtKB-UniRule"/>
</dbReference>
<dbReference type="GO" id="GO:0016829">
    <property type="term" value="F:lyase activity"/>
    <property type="evidence" value="ECO:0007669"/>
    <property type="project" value="UniProtKB-KW"/>
</dbReference>
<dbReference type="GO" id="GO:0000105">
    <property type="term" value="P:L-histidine biosynthetic process"/>
    <property type="evidence" value="ECO:0007669"/>
    <property type="project" value="UniProtKB-UniRule"/>
</dbReference>
<dbReference type="CDD" id="cd01748">
    <property type="entry name" value="GATase1_IGP_Synthase"/>
    <property type="match status" value="1"/>
</dbReference>
<dbReference type="FunFam" id="3.40.50.880:FF:000009">
    <property type="entry name" value="Imidazole glycerol phosphate synthase subunit HisH"/>
    <property type="match status" value="1"/>
</dbReference>
<dbReference type="Gene3D" id="3.40.50.880">
    <property type="match status" value="1"/>
</dbReference>
<dbReference type="HAMAP" id="MF_00278">
    <property type="entry name" value="HisH"/>
    <property type="match status" value="1"/>
</dbReference>
<dbReference type="InterPro" id="IPR029062">
    <property type="entry name" value="Class_I_gatase-like"/>
</dbReference>
<dbReference type="InterPro" id="IPR017926">
    <property type="entry name" value="GATASE"/>
</dbReference>
<dbReference type="InterPro" id="IPR010139">
    <property type="entry name" value="Imidazole-glycPsynth_HisH"/>
</dbReference>
<dbReference type="NCBIfam" id="TIGR01855">
    <property type="entry name" value="IMP_synth_hisH"/>
    <property type="match status" value="1"/>
</dbReference>
<dbReference type="PANTHER" id="PTHR42701">
    <property type="entry name" value="IMIDAZOLE GLYCEROL PHOSPHATE SYNTHASE SUBUNIT HISH"/>
    <property type="match status" value="1"/>
</dbReference>
<dbReference type="PANTHER" id="PTHR42701:SF1">
    <property type="entry name" value="IMIDAZOLE GLYCEROL PHOSPHATE SYNTHASE SUBUNIT HISH"/>
    <property type="match status" value="1"/>
</dbReference>
<dbReference type="Pfam" id="PF00117">
    <property type="entry name" value="GATase"/>
    <property type="match status" value="1"/>
</dbReference>
<dbReference type="PIRSF" id="PIRSF000495">
    <property type="entry name" value="Amidotransf_hisH"/>
    <property type="match status" value="1"/>
</dbReference>
<dbReference type="PRINTS" id="PR00096">
    <property type="entry name" value="GATASE"/>
</dbReference>
<dbReference type="SUPFAM" id="SSF52317">
    <property type="entry name" value="Class I glutamine amidotransferase-like"/>
    <property type="match status" value="1"/>
</dbReference>
<dbReference type="PROSITE" id="PS51273">
    <property type="entry name" value="GATASE_TYPE_1"/>
    <property type="match status" value="1"/>
</dbReference>
<sequence length="196" mass="21653">MNVVILDTGCANLNSVKSAIARHGYEPKVSRDPDVVLLADKLFLPGVGTAQAAMDQVRERELFDLIKACTQPVLGICLGMQLLGRRSEESNGVDLLGIIDEDVPKMTDFGLPLPHMGWNRVYPQAGNRLFQGIEDGAYFYFVHSYAMPVNPWTIAQCNYGEPFTAAVQKDNFYGVQFHPERSGAAGAKLLKNFLEM</sequence>